<gene>
    <name type="primary">TRR1</name>
    <name type="ordered locus">ACL109C</name>
</gene>
<evidence type="ECO:0000250" key="1">
    <source>
        <dbReference type="UniProtKB" id="P29509"/>
    </source>
</evidence>
<evidence type="ECO:0000305" key="2"/>
<name>TRXB_EREGS</name>
<accession>Q75CM8</accession>
<organism>
    <name type="scientific">Eremothecium gossypii (strain ATCC 10895 / CBS 109.51 / FGSC 9923 / NRRL Y-1056)</name>
    <name type="common">Yeast</name>
    <name type="synonym">Ashbya gossypii</name>
    <dbReference type="NCBI Taxonomy" id="284811"/>
    <lineage>
        <taxon>Eukaryota</taxon>
        <taxon>Fungi</taxon>
        <taxon>Dikarya</taxon>
        <taxon>Ascomycota</taxon>
        <taxon>Saccharomycotina</taxon>
        <taxon>Saccharomycetes</taxon>
        <taxon>Saccharomycetales</taxon>
        <taxon>Saccharomycetaceae</taxon>
        <taxon>Eremothecium</taxon>
    </lineage>
</organism>
<keyword id="KW-0963">Cytoplasm</keyword>
<keyword id="KW-1015">Disulfide bond</keyword>
<keyword id="KW-0274">FAD</keyword>
<keyword id="KW-0285">Flavoprotein</keyword>
<keyword id="KW-0521">NADP</keyword>
<keyword id="KW-0560">Oxidoreductase</keyword>
<keyword id="KW-0676">Redox-active center</keyword>
<keyword id="KW-1185">Reference proteome</keyword>
<comment type="catalytic activity">
    <reaction>
        <text>[thioredoxin]-dithiol + NADP(+) = [thioredoxin]-disulfide + NADPH + H(+)</text>
        <dbReference type="Rhea" id="RHEA:20345"/>
        <dbReference type="Rhea" id="RHEA-COMP:10698"/>
        <dbReference type="Rhea" id="RHEA-COMP:10700"/>
        <dbReference type="ChEBI" id="CHEBI:15378"/>
        <dbReference type="ChEBI" id="CHEBI:29950"/>
        <dbReference type="ChEBI" id="CHEBI:50058"/>
        <dbReference type="ChEBI" id="CHEBI:57783"/>
        <dbReference type="ChEBI" id="CHEBI:58349"/>
        <dbReference type="EC" id="1.8.1.9"/>
    </reaction>
</comment>
<comment type="cofactor">
    <cofactor evidence="1">
        <name>FAD</name>
        <dbReference type="ChEBI" id="CHEBI:57692"/>
    </cofactor>
    <text evidence="1">Binds 1 FAD per subunit.</text>
</comment>
<comment type="subunit">
    <text evidence="1">Homodimer.</text>
</comment>
<comment type="subcellular location">
    <subcellularLocation>
        <location evidence="1">Cytoplasm</location>
    </subcellularLocation>
</comment>
<comment type="miscellaneous">
    <text>The active site is a redox-active disulfide bond.</text>
</comment>
<comment type="similarity">
    <text evidence="2">Belongs to the class-II pyridine nucleotide-disulfide oxidoreductase family.</text>
</comment>
<comment type="sequence caution" evidence="2">
    <conflict type="erroneous initiation">
        <sequence resource="EMBL-CDS" id="AAS51119"/>
    </conflict>
</comment>
<sequence>MVHHKVTIIGSGPAAHTAAIYLARAEIKPTLYEGMFANGVAAGGQLTTTTEIENFPGFPDGLTGSDLMERMKAQSVKFGTEVVTETVAKVDLSARPFKLWTEFNEDEEPTTTDAIILATGASAKRLGLPGEETYWQRGISACAVCDGAVPIFRNKPLAVVGGGDSACEEASFLTKYGSKVFMLVRKDHMRASTIMQRRVERNEKIEVLYNTAPVEAKGDGSLLDALRVRDTRTGEESDLPVNGLFYAIGHTPATQLVAGQVDLDESGYVKTVPGSTLTNVPGLFAAGDVQDSRYRQAVTSAGSGCMAALDAEKFLSELE</sequence>
<reference key="1">
    <citation type="journal article" date="2004" name="Science">
        <title>The Ashbya gossypii genome as a tool for mapping the ancient Saccharomyces cerevisiae genome.</title>
        <authorList>
            <person name="Dietrich F.S."/>
            <person name="Voegeli S."/>
            <person name="Brachat S."/>
            <person name="Lerch A."/>
            <person name="Gates K."/>
            <person name="Steiner S."/>
            <person name="Mohr C."/>
            <person name="Poehlmann R."/>
            <person name="Luedi P."/>
            <person name="Choi S."/>
            <person name="Wing R.A."/>
            <person name="Flavier A."/>
            <person name="Gaffney T.D."/>
            <person name="Philippsen P."/>
        </authorList>
    </citation>
    <scope>NUCLEOTIDE SEQUENCE [LARGE SCALE GENOMIC DNA]</scope>
    <source>
        <strain>ATCC 10895 / CBS 109.51 / FGSC 9923 / NRRL Y-1056</strain>
    </source>
</reference>
<reference key="2">
    <citation type="journal article" date="2013" name="G3 (Bethesda)">
        <title>Genomes of Ashbya fungi isolated from insects reveal four mating-type loci, numerous translocations, lack of transposons, and distinct gene duplications.</title>
        <authorList>
            <person name="Dietrich F.S."/>
            <person name="Voegeli S."/>
            <person name="Kuo S."/>
            <person name="Philippsen P."/>
        </authorList>
    </citation>
    <scope>GENOME REANNOTATION</scope>
    <source>
        <strain>ATCC 10895 / CBS 109.51 / FGSC 9923 / NRRL Y-1056</strain>
    </source>
</reference>
<protein>
    <recommendedName>
        <fullName>Thioredoxin reductase</fullName>
        <ecNumber>1.8.1.9</ecNumber>
    </recommendedName>
</protein>
<feature type="chain" id="PRO_0000166761" description="Thioredoxin reductase">
    <location>
        <begin position="1"/>
        <end position="319"/>
    </location>
</feature>
<feature type="binding site" evidence="1">
    <location>
        <begin position="11"/>
        <end position="14"/>
    </location>
    <ligand>
        <name>FAD</name>
        <dbReference type="ChEBI" id="CHEBI:57692"/>
    </ligand>
</feature>
<feature type="binding site" evidence="1">
    <location>
        <begin position="40"/>
        <end position="41"/>
    </location>
    <ligand>
        <name>FAD</name>
        <dbReference type="ChEBI" id="CHEBI:57692"/>
    </ligand>
</feature>
<feature type="binding site" evidence="1">
    <location>
        <position position="45"/>
    </location>
    <ligand>
        <name>FAD</name>
        <dbReference type="ChEBI" id="CHEBI:57692"/>
    </ligand>
</feature>
<feature type="binding site" evidence="1">
    <location>
        <position position="54"/>
    </location>
    <ligand>
        <name>FAD</name>
        <dbReference type="ChEBI" id="CHEBI:57692"/>
    </ligand>
</feature>
<feature type="binding site" evidence="1">
    <location>
        <position position="87"/>
    </location>
    <ligand>
        <name>FAD</name>
        <dbReference type="ChEBI" id="CHEBI:57692"/>
    </ligand>
</feature>
<feature type="binding site" evidence="1">
    <location>
        <position position="145"/>
    </location>
    <ligand>
        <name>FAD</name>
        <dbReference type="ChEBI" id="CHEBI:57692"/>
    </ligand>
</feature>
<feature type="binding site" evidence="1">
    <location>
        <position position="288"/>
    </location>
    <ligand>
        <name>FAD</name>
        <dbReference type="ChEBI" id="CHEBI:57692"/>
    </ligand>
</feature>
<feature type="binding site" evidence="1">
    <location>
        <begin position="295"/>
        <end position="297"/>
    </location>
    <ligand>
        <name>FAD</name>
        <dbReference type="ChEBI" id="CHEBI:57692"/>
    </ligand>
</feature>
<feature type="disulfide bond" description="Redox-active" evidence="1">
    <location>
        <begin position="142"/>
        <end position="145"/>
    </location>
</feature>
<dbReference type="EC" id="1.8.1.9"/>
<dbReference type="EMBL" id="AE016816">
    <property type="protein sequence ID" value="AAS51119.1"/>
    <property type="status" value="ALT_INIT"/>
    <property type="molecule type" value="Genomic_DNA"/>
</dbReference>
<dbReference type="RefSeq" id="NP_983295.1">
    <property type="nucleotide sequence ID" value="NM_208648.1"/>
</dbReference>
<dbReference type="SMR" id="Q75CM8"/>
<dbReference type="FunCoup" id="Q75CM8">
    <property type="interactions" value="224"/>
</dbReference>
<dbReference type="STRING" id="284811.Q75CM8"/>
<dbReference type="GeneID" id="4619415"/>
<dbReference type="KEGG" id="ago:AGOS_ACL109C"/>
<dbReference type="eggNOG" id="KOG0404">
    <property type="taxonomic scope" value="Eukaryota"/>
</dbReference>
<dbReference type="InParanoid" id="Q75CM8"/>
<dbReference type="OrthoDB" id="371245at2759"/>
<dbReference type="Proteomes" id="UP000000591">
    <property type="component" value="Chromosome III"/>
</dbReference>
<dbReference type="GO" id="GO:0005829">
    <property type="term" value="C:cytosol"/>
    <property type="evidence" value="ECO:0000318"/>
    <property type="project" value="GO_Central"/>
</dbReference>
<dbReference type="GO" id="GO:0004791">
    <property type="term" value="F:thioredoxin-disulfide reductase (NADPH) activity"/>
    <property type="evidence" value="ECO:0000318"/>
    <property type="project" value="GO_Central"/>
</dbReference>
<dbReference type="GO" id="GO:0045454">
    <property type="term" value="P:cell redox homeostasis"/>
    <property type="evidence" value="ECO:0000318"/>
    <property type="project" value="GO_Central"/>
</dbReference>
<dbReference type="GO" id="GO:0019430">
    <property type="term" value="P:removal of superoxide radicals"/>
    <property type="evidence" value="ECO:0007669"/>
    <property type="project" value="InterPro"/>
</dbReference>
<dbReference type="FunFam" id="3.50.50.60:FF:000064">
    <property type="entry name" value="Thioredoxin reductase"/>
    <property type="match status" value="1"/>
</dbReference>
<dbReference type="Gene3D" id="3.50.50.60">
    <property type="entry name" value="FAD/NAD(P)-binding domain"/>
    <property type="match status" value="2"/>
</dbReference>
<dbReference type="InterPro" id="IPR036188">
    <property type="entry name" value="FAD/NAD-bd_sf"/>
</dbReference>
<dbReference type="InterPro" id="IPR023753">
    <property type="entry name" value="FAD/NAD-binding_dom"/>
</dbReference>
<dbReference type="InterPro" id="IPR050097">
    <property type="entry name" value="Ferredoxin-NADP_redctase_2"/>
</dbReference>
<dbReference type="InterPro" id="IPR008255">
    <property type="entry name" value="Pyr_nucl-diS_OxRdtase_2_AS"/>
</dbReference>
<dbReference type="InterPro" id="IPR005982">
    <property type="entry name" value="Thioredox_Rdtase"/>
</dbReference>
<dbReference type="NCBIfam" id="TIGR01292">
    <property type="entry name" value="TRX_reduct"/>
    <property type="match status" value="1"/>
</dbReference>
<dbReference type="PANTHER" id="PTHR48105">
    <property type="entry name" value="THIOREDOXIN REDUCTASE 1-RELATED-RELATED"/>
    <property type="match status" value="1"/>
</dbReference>
<dbReference type="Pfam" id="PF07992">
    <property type="entry name" value="Pyr_redox_2"/>
    <property type="match status" value="1"/>
</dbReference>
<dbReference type="PRINTS" id="PR00368">
    <property type="entry name" value="FADPNR"/>
</dbReference>
<dbReference type="PRINTS" id="PR00469">
    <property type="entry name" value="PNDRDTASEII"/>
</dbReference>
<dbReference type="SUPFAM" id="SSF51905">
    <property type="entry name" value="FAD/NAD(P)-binding domain"/>
    <property type="match status" value="1"/>
</dbReference>
<dbReference type="PROSITE" id="PS00573">
    <property type="entry name" value="PYRIDINE_REDOX_2"/>
    <property type="match status" value="1"/>
</dbReference>
<proteinExistence type="inferred from homology"/>